<gene>
    <name evidence="1" type="primary">murB</name>
    <name type="ordered locus">Tmel_1529</name>
</gene>
<name>MURB_THEM4</name>
<protein>
    <recommendedName>
        <fullName evidence="1">UDP-N-acetylenolpyruvoylglucosamine reductase</fullName>
        <ecNumber evidence="1">1.3.1.98</ecNumber>
    </recommendedName>
    <alternativeName>
        <fullName evidence="1">UDP-N-acetylmuramate dehydrogenase</fullName>
    </alternativeName>
</protein>
<comment type="function">
    <text evidence="1">Cell wall formation.</text>
</comment>
<comment type="catalytic activity">
    <reaction evidence="1">
        <text>UDP-N-acetyl-alpha-D-muramate + NADP(+) = UDP-N-acetyl-3-O-(1-carboxyvinyl)-alpha-D-glucosamine + NADPH + H(+)</text>
        <dbReference type="Rhea" id="RHEA:12248"/>
        <dbReference type="ChEBI" id="CHEBI:15378"/>
        <dbReference type="ChEBI" id="CHEBI:57783"/>
        <dbReference type="ChEBI" id="CHEBI:58349"/>
        <dbReference type="ChEBI" id="CHEBI:68483"/>
        <dbReference type="ChEBI" id="CHEBI:70757"/>
        <dbReference type="EC" id="1.3.1.98"/>
    </reaction>
</comment>
<comment type="cofactor">
    <cofactor evidence="1">
        <name>FAD</name>
        <dbReference type="ChEBI" id="CHEBI:57692"/>
    </cofactor>
</comment>
<comment type="pathway">
    <text evidence="1">Cell wall biogenesis; peptidoglycan biosynthesis.</text>
</comment>
<comment type="subcellular location">
    <subcellularLocation>
        <location evidence="1">Cytoplasm</location>
    </subcellularLocation>
</comment>
<comment type="similarity">
    <text evidence="1">Belongs to the MurB family.</text>
</comment>
<sequence length="292" mass="32986">MKLIDTLLKLGNDVHINEKMKCHVSFKIGGPVRLFIIPYTVDMFLETLNVLDNVKILGNGTNVLPKDEYMDFNVISTEKLTGIFVENDTIICESGLSLKKLCLYAAKEGFSGFENAYGIPGSVGGAAYMNAGAFGWETAEMIEFVDVYDGKKVLRLDRTEMKFSYRNSIFKENEDLIILRVGFRIIKGDSYNIFSRMKQVMIKRVEKQPLEFPSAGSVFKRPRKGFYVGSAIEKIGLKGFRIGGAMISEKHAGFIINYNNAKSSDVKDMIELVKDKIYKNFGVKLETEIEIW</sequence>
<keyword id="KW-0131">Cell cycle</keyword>
<keyword id="KW-0132">Cell division</keyword>
<keyword id="KW-0133">Cell shape</keyword>
<keyword id="KW-0961">Cell wall biogenesis/degradation</keyword>
<keyword id="KW-0963">Cytoplasm</keyword>
<keyword id="KW-0274">FAD</keyword>
<keyword id="KW-0285">Flavoprotein</keyword>
<keyword id="KW-0521">NADP</keyword>
<keyword id="KW-0560">Oxidoreductase</keyword>
<keyword id="KW-0573">Peptidoglycan synthesis</keyword>
<proteinExistence type="inferred from homology"/>
<dbReference type="EC" id="1.3.1.98" evidence="1"/>
<dbReference type="EMBL" id="CP000716">
    <property type="protein sequence ID" value="ABR31374.1"/>
    <property type="molecule type" value="Genomic_DNA"/>
</dbReference>
<dbReference type="RefSeq" id="WP_012057733.1">
    <property type="nucleotide sequence ID" value="NC_009616.1"/>
</dbReference>
<dbReference type="SMR" id="A6LN73"/>
<dbReference type="STRING" id="391009.Tmel_1529"/>
<dbReference type="KEGG" id="tme:Tmel_1529"/>
<dbReference type="eggNOG" id="COG0812">
    <property type="taxonomic scope" value="Bacteria"/>
</dbReference>
<dbReference type="HOGENOM" id="CLU_035304_1_1_0"/>
<dbReference type="OrthoDB" id="9804753at2"/>
<dbReference type="UniPathway" id="UPA00219"/>
<dbReference type="Proteomes" id="UP000001110">
    <property type="component" value="Chromosome"/>
</dbReference>
<dbReference type="GO" id="GO:0005829">
    <property type="term" value="C:cytosol"/>
    <property type="evidence" value="ECO:0007669"/>
    <property type="project" value="TreeGrafter"/>
</dbReference>
<dbReference type="GO" id="GO:0071949">
    <property type="term" value="F:FAD binding"/>
    <property type="evidence" value="ECO:0007669"/>
    <property type="project" value="InterPro"/>
</dbReference>
<dbReference type="GO" id="GO:0008762">
    <property type="term" value="F:UDP-N-acetylmuramate dehydrogenase activity"/>
    <property type="evidence" value="ECO:0007669"/>
    <property type="project" value="UniProtKB-UniRule"/>
</dbReference>
<dbReference type="GO" id="GO:0051301">
    <property type="term" value="P:cell division"/>
    <property type="evidence" value="ECO:0007669"/>
    <property type="project" value="UniProtKB-KW"/>
</dbReference>
<dbReference type="GO" id="GO:0071555">
    <property type="term" value="P:cell wall organization"/>
    <property type="evidence" value="ECO:0007669"/>
    <property type="project" value="UniProtKB-KW"/>
</dbReference>
<dbReference type="GO" id="GO:0009252">
    <property type="term" value="P:peptidoglycan biosynthetic process"/>
    <property type="evidence" value="ECO:0007669"/>
    <property type="project" value="UniProtKB-UniRule"/>
</dbReference>
<dbReference type="GO" id="GO:0008360">
    <property type="term" value="P:regulation of cell shape"/>
    <property type="evidence" value="ECO:0007669"/>
    <property type="project" value="UniProtKB-KW"/>
</dbReference>
<dbReference type="Gene3D" id="3.30.465.10">
    <property type="match status" value="1"/>
</dbReference>
<dbReference type="Gene3D" id="3.90.78.10">
    <property type="entry name" value="UDP-N-acetylenolpyruvoylglucosamine reductase, C-terminal domain"/>
    <property type="match status" value="1"/>
</dbReference>
<dbReference type="Gene3D" id="3.30.43.10">
    <property type="entry name" value="Uridine Diphospho-n-acetylenolpyruvylglucosamine Reductase, domain 2"/>
    <property type="match status" value="1"/>
</dbReference>
<dbReference type="HAMAP" id="MF_00037">
    <property type="entry name" value="MurB"/>
    <property type="match status" value="1"/>
</dbReference>
<dbReference type="InterPro" id="IPR016166">
    <property type="entry name" value="FAD-bd_PCMH"/>
</dbReference>
<dbReference type="InterPro" id="IPR036318">
    <property type="entry name" value="FAD-bd_PCMH-like_sf"/>
</dbReference>
<dbReference type="InterPro" id="IPR016167">
    <property type="entry name" value="FAD-bd_PCMH_sub1"/>
</dbReference>
<dbReference type="InterPro" id="IPR016169">
    <property type="entry name" value="FAD-bd_PCMH_sub2"/>
</dbReference>
<dbReference type="InterPro" id="IPR003170">
    <property type="entry name" value="MurB"/>
</dbReference>
<dbReference type="InterPro" id="IPR011601">
    <property type="entry name" value="MurB_C"/>
</dbReference>
<dbReference type="InterPro" id="IPR036635">
    <property type="entry name" value="MurB_C_sf"/>
</dbReference>
<dbReference type="InterPro" id="IPR006094">
    <property type="entry name" value="Oxid_FAD_bind_N"/>
</dbReference>
<dbReference type="NCBIfam" id="TIGR00179">
    <property type="entry name" value="murB"/>
    <property type="match status" value="1"/>
</dbReference>
<dbReference type="NCBIfam" id="NF010480">
    <property type="entry name" value="PRK13905.1"/>
    <property type="match status" value="1"/>
</dbReference>
<dbReference type="PANTHER" id="PTHR21071">
    <property type="entry name" value="UDP-N-ACETYLENOLPYRUVOYLGLUCOSAMINE REDUCTASE"/>
    <property type="match status" value="1"/>
</dbReference>
<dbReference type="PANTHER" id="PTHR21071:SF4">
    <property type="entry name" value="UDP-N-ACETYLENOLPYRUVOYLGLUCOSAMINE REDUCTASE"/>
    <property type="match status" value="1"/>
</dbReference>
<dbReference type="Pfam" id="PF01565">
    <property type="entry name" value="FAD_binding_4"/>
    <property type="match status" value="1"/>
</dbReference>
<dbReference type="Pfam" id="PF02873">
    <property type="entry name" value="MurB_C"/>
    <property type="match status" value="1"/>
</dbReference>
<dbReference type="SUPFAM" id="SSF56176">
    <property type="entry name" value="FAD-binding/transporter-associated domain-like"/>
    <property type="match status" value="1"/>
</dbReference>
<dbReference type="SUPFAM" id="SSF56194">
    <property type="entry name" value="Uridine diphospho-N-Acetylenolpyruvylglucosamine reductase, MurB, C-terminal domain"/>
    <property type="match status" value="1"/>
</dbReference>
<dbReference type="PROSITE" id="PS51387">
    <property type="entry name" value="FAD_PCMH"/>
    <property type="match status" value="1"/>
</dbReference>
<reference key="1">
    <citation type="submission" date="2007-05" db="EMBL/GenBank/DDBJ databases">
        <title>Complete sequence of Thermosipho melanesiensis BI429.</title>
        <authorList>
            <consortium name="US DOE Joint Genome Institute"/>
            <person name="Copeland A."/>
            <person name="Lucas S."/>
            <person name="Lapidus A."/>
            <person name="Barry K."/>
            <person name="Glavina del Rio T."/>
            <person name="Dalin E."/>
            <person name="Tice H."/>
            <person name="Pitluck S."/>
            <person name="Chertkov O."/>
            <person name="Brettin T."/>
            <person name="Bruce D."/>
            <person name="Detter J.C."/>
            <person name="Han C."/>
            <person name="Schmutz J."/>
            <person name="Larimer F."/>
            <person name="Land M."/>
            <person name="Hauser L."/>
            <person name="Kyrpides N."/>
            <person name="Mikhailova N."/>
            <person name="Nelson K."/>
            <person name="Gogarten J.P."/>
            <person name="Noll K."/>
            <person name="Richardson P."/>
        </authorList>
    </citation>
    <scope>NUCLEOTIDE SEQUENCE [LARGE SCALE GENOMIC DNA]</scope>
    <source>
        <strain>DSM 12029 / CIP 104789 / BI429</strain>
    </source>
</reference>
<accession>A6LN73</accession>
<feature type="chain" id="PRO_0000332518" description="UDP-N-acetylenolpyruvoylglucosamine reductase">
    <location>
        <begin position="1"/>
        <end position="292"/>
    </location>
</feature>
<feature type="domain" description="FAD-binding PCMH-type" evidence="1">
    <location>
        <begin position="27"/>
        <end position="188"/>
    </location>
</feature>
<feature type="active site" evidence="1">
    <location>
        <position position="166"/>
    </location>
</feature>
<feature type="active site" description="Proton donor" evidence="1">
    <location>
        <position position="217"/>
    </location>
</feature>
<feature type="active site" evidence="1">
    <location>
        <position position="288"/>
    </location>
</feature>
<organism>
    <name type="scientific">Thermosipho melanesiensis (strain DSM 12029 / CIP 104789 / BI429)</name>
    <dbReference type="NCBI Taxonomy" id="391009"/>
    <lineage>
        <taxon>Bacteria</taxon>
        <taxon>Thermotogati</taxon>
        <taxon>Thermotogota</taxon>
        <taxon>Thermotogae</taxon>
        <taxon>Thermotogales</taxon>
        <taxon>Fervidobacteriaceae</taxon>
        <taxon>Thermosipho</taxon>
    </lineage>
</organism>
<evidence type="ECO:0000255" key="1">
    <source>
        <dbReference type="HAMAP-Rule" id="MF_00037"/>
    </source>
</evidence>